<evidence type="ECO:0000255" key="1">
    <source>
        <dbReference type="PROSITE-ProRule" id="PRU00227"/>
    </source>
</evidence>
<evidence type="ECO:0000256" key="2">
    <source>
        <dbReference type="SAM" id="MobiDB-lite"/>
    </source>
</evidence>
<evidence type="ECO:0000269" key="3">
    <source>
    </source>
</evidence>
<evidence type="ECO:0000303" key="4">
    <source>
    </source>
</evidence>
<evidence type="ECO:0000303" key="5">
    <source>
    </source>
</evidence>
<evidence type="ECO:0000305" key="6"/>
<evidence type="ECO:0000305" key="7">
    <source>
    </source>
</evidence>
<organism>
    <name type="scientific">Emericella nidulans (strain FGSC A4 / ATCC 38163 / CBS 112.46 / NRRL 194 / M139)</name>
    <name type="common">Aspergillus nidulans</name>
    <dbReference type="NCBI Taxonomy" id="227321"/>
    <lineage>
        <taxon>Eukaryota</taxon>
        <taxon>Fungi</taxon>
        <taxon>Dikarya</taxon>
        <taxon>Ascomycota</taxon>
        <taxon>Pezizomycotina</taxon>
        <taxon>Eurotiomycetes</taxon>
        <taxon>Eurotiomycetidae</taxon>
        <taxon>Eurotiales</taxon>
        <taxon>Aspergillaceae</taxon>
        <taxon>Aspergillus</taxon>
        <taxon>Aspergillus subgen. Nidulantes</taxon>
    </lineage>
</organism>
<accession>C8V3N0</accession>
<accession>Q5AV08</accession>
<feature type="chain" id="PRO_0000444133" description="Aspercryptin biosynthesis cluster-specific transcription regulator atnN">
    <location>
        <begin position="1"/>
        <end position="610"/>
    </location>
</feature>
<feature type="DNA-binding region" description="Zn(2)-C6 fungal-type" evidence="1">
    <location>
        <begin position="30"/>
        <end position="57"/>
    </location>
</feature>
<feature type="region of interest" description="Disordered" evidence="2">
    <location>
        <begin position="1"/>
        <end position="27"/>
    </location>
</feature>
<feature type="region of interest" description="Disordered" evidence="2">
    <location>
        <begin position="61"/>
        <end position="81"/>
    </location>
</feature>
<feature type="region of interest" description="Disordered" evidence="2">
    <location>
        <begin position="427"/>
        <end position="493"/>
    </location>
</feature>
<feature type="compositionally biased region" description="Polar residues" evidence="2">
    <location>
        <begin position="1"/>
        <end position="26"/>
    </location>
</feature>
<feature type="compositionally biased region" description="Low complexity" evidence="2">
    <location>
        <begin position="66"/>
        <end position="79"/>
    </location>
</feature>
<feature type="compositionally biased region" description="Low complexity" evidence="2">
    <location>
        <begin position="437"/>
        <end position="474"/>
    </location>
</feature>
<keyword id="KW-0238">DNA-binding</keyword>
<keyword id="KW-0479">Metal-binding</keyword>
<keyword id="KW-0539">Nucleus</keyword>
<keyword id="KW-1185">Reference proteome</keyword>
<keyword id="KW-0804">Transcription</keyword>
<keyword id="KW-0805">Transcription regulation</keyword>
<keyword id="KW-0862">Zinc</keyword>
<dbReference type="EMBL" id="BN001302">
    <property type="protein sequence ID" value="CBF73428.1"/>
    <property type="molecule type" value="Genomic_DNA"/>
</dbReference>
<dbReference type="EMBL" id="AACD01000134">
    <property type="protein sequence ID" value="EAA58917.1"/>
    <property type="status" value="ALT_SEQ"/>
    <property type="molecule type" value="Genomic_DNA"/>
</dbReference>
<dbReference type="RefSeq" id="XP_681141.1">
    <property type="nucleotide sequence ID" value="XM_676049.1"/>
</dbReference>
<dbReference type="SMR" id="C8V3N0"/>
<dbReference type="EnsemblFungi" id="CBF73428">
    <property type="protein sequence ID" value="CBF73428"/>
    <property type="gene ID" value="ANIA_07872"/>
</dbReference>
<dbReference type="VEuPathDB" id="FungiDB:AN7872"/>
<dbReference type="eggNOG" id="ENOG502SQ3E">
    <property type="taxonomic scope" value="Eukaryota"/>
</dbReference>
<dbReference type="HOGENOM" id="CLU_366813_0_0_1"/>
<dbReference type="InParanoid" id="C8V3N0"/>
<dbReference type="OMA" id="CRSTGRK"/>
<dbReference type="OrthoDB" id="2593732at2759"/>
<dbReference type="Proteomes" id="UP000000560">
    <property type="component" value="Chromosome II"/>
</dbReference>
<dbReference type="GO" id="GO:0005634">
    <property type="term" value="C:nucleus"/>
    <property type="evidence" value="ECO:0000318"/>
    <property type="project" value="GO_Central"/>
</dbReference>
<dbReference type="GO" id="GO:0003677">
    <property type="term" value="F:DNA binding"/>
    <property type="evidence" value="ECO:0007669"/>
    <property type="project" value="UniProtKB-KW"/>
</dbReference>
<dbReference type="GO" id="GO:0000981">
    <property type="term" value="F:DNA-binding transcription factor activity, RNA polymerase II-specific"/>
    <property type="evidence" value="ECO:0007669"/>
    <property type="project" value="InterPro"/>
</dbReference>
<dbReference type="GO" id="GO:0008270">
    <property type="term" value="F:zinc ion binding"/>
    <property type="evidence" value="ECO:0007669"/>
    <property type="project" value="InterPro"/>
</dbReference>
<dbReference type="GO" id="GO:0006357">
    <property type="term" value="P:regulation of transcription by RNA polymerase II"/>
    <property type="evidence" value="ECO:0000318"/>
    <property type="project" value="GO_Central"/>
</dbReference>
<dbReference type="CDD" id="cd00067">
    <property type="entry name" value="GAL4"/>
    <property type="match status" value="1"/>
</dbReference>
<dbReference type="Gene3D" id="4.10.240.10">
    <property type="entry name" value="Zn(2)-C6 fungal-type DNA-binding domain"/>
    <property type="match status" value="1"/>
</dbReference>
<dbReference type="InterPro" id="IPR052360">
    <property type="entry name" value="Transcr_Regulatory_Proteins"/>
</dbReference>
<dbReference type="InterPro" id="IPR036864">
    <property type="entry name" value="Zn2-C6_fun-type_DNA-bd_sf"/>
</dbReference>
<dbReference type="InterPro" id="IPR001138">
    <property type="entry name" value="Zn2Cys6_DnaBD"/>
</dbReference>
<dbReference type="PANTHER" id="PTHR36206">
    <property type="entry name" value="ASPERCRYPTIN BIOSYNTHESIS CLUSTER-SPECIFIC TRANSCRIPTION REGULATOR ATNN-RELATED"/>
    <property type="match status" value="1"/>
</dbReference>
<dbReference type="PANTHER" id="PTHR36206:SF12">
    <property type="entry name" value="ASPERCRYPTIN BIOSYNTHESIS CLUSTER-SPECIFIC TRANSCRIPTION REGULATOR ATNN-RELATED"/>
    <property type="match status" value="1"/>
</dbReference>
<dbReference type="Pfam" id="PF00172">
    <property type="entry name" value="Zn_clus"/>
    <property type="match status" value="1"/>
</dbReference>
<dbReference type="SMART" id="SM00066">
    <property type="entry name" value="GAL4"/>
    <property type="match status" value="1"/>
</dbReference>
<dbReference type="SUPFAM" id="SSF57701">
    <property type="entry name" value="Zn2/Cys6 DNA-binding domain"/>
    <property type="match status" value="1"/>
</dbReference>
<dbReference type="PROSITE" id="PS00463">
    <property type="entry name" value="ZN2_CY6_FUNGAL_1"/>
    <property type="match status" value="1"/>
</dbReference>
<dbReference type="PROSITE" id="PS50048">
    <property type="entry name" value="ZN2_CY6_FUNGAL_2"/>
    <property type="match status" value="1"/>
</dbReference>
<gene>
    <name evidence="4" type="primary">atnN</name>
    <name type="ORF">ANIA_07872</name>
</gene>
<comment type="function">
    <text evidence="3 7">Transcription factor that positively regulates the cluster that mediate the production of aspercryptins, linear lipopeptides built from six amino acids including 2 highly unusual and nonproteogenic amino acids, 2-amino-octanoic acid (2aoa) and 2-amino-dodecanol (2adol) (PubMed:26563584, PubMed:27310134).</text>
</comment>
<comment type="subcellular location">
    <subcellularLocation>
        <location evidence="1">Nucleus</location>
    </subcellularLocation>
</comment>
<comment type="sequence caution" evidence="6">
    <conflict type="erroneous gene model prediction">
        <sequence resource="EMBL-CDS" id="EAA58917"/>
    </conflict>
</comment>
<reference key="1">
    <citation type="journal article" date="2005" name="Nature">
        <title>Sequencing of Aspergillus nidulans and comparative analysis with A. fumigatus and A. oryzae.</title>
        <authorList>
            <person name="Galagan J.E."/>
            <person name="Calvo S.E."/>
            <person name="Cuomo C."/>
            <person name="Ma L.-J."/>
            <person name="Wortman J.R."/>
            <person name="Batzoglou S."/>
            <person name="Lee S.-I."/>
            <person name="Bastuerkmen M."/>
            <person name="Spevak C.C."/>
            <person name="Clutterbuck J."/>
            <person name="Kapitonov V."/>
            <person name="Jurka J."/>
            <person name="Scazzocchio C."/>
            <person name="Farman M.L."/>
            <person name="Butler J."/>
            <person name="Purcell S."/>
            <person name="Harris S."/>
            <person name="Braus G.H."/>
            <person name="Draht O."/>
            <person name="Busch S."/>
            <person name="D'Enfert C."/>
            <person name="Bouchier C."/>
            <person name="Goldman G.H."/>
            <person name="Bell-Pedersen D."/>
            <person name="Griffiths-Jones S."/>
            <person name="Doonan J.H."/>
            <person name="Yu J."/>
            <person name="Vienken K."/>
            <person name="Pain A."/>
            <person name="Freitag M."/>
            <person name="Selker E.U."/>
            <person name="Archer D.B."/>
            <person name="Penalva M.A."/>
            <person name="Oakley B.R."/>
            <person name="Momany M."/>
            <person name="Tanaka T."/>
            <person name="Kumagai T."/>
            <person name="Asai K."/>
            <person name="Machida M."/>
            <person name="Nierman W.C."/>
            <person name="Denning D.W."/>
            <person name="Caddick M.X."/>
            <person name="Hynes M."/>
            <person name="Paoletti M."/>
            <person name="Fischer R."/>
            <person name="Miller B.L."/>
            <person name="Dyer P.S."/>
            <person name="Sachs M.S."/>
            <person name="Osmani S.A."/>
            <person name="Birren B.W."/>
        </authorList>
    </citation>
    <scope>NUCLEOTIDE SEQUENCE [LARGE SCALE GENOMIC DNA]</scope>
    <source>
        <strain>FGSC A4 / ATCC 38163 / CBS 112.46 / NRRL 194 / M139</strain>
    </source>
</reference>
<reference key="2">
    <citation type="journal article" date="2009" name="Fungal Genet. Biol.">
        <title>The 2008 update of the Aspergillus nidulans genome annotation: a community effort.</title>
        <authorList>
            <person name="Wortman J.R."/>
            <person name="Gilsenan J.M."/>
            <person name="Joardar V."/>
            <person name="Deegan J."/>
            <person name="Clutterbuck J."/>
            <person name="Andersen M.R."/>
            <person name="Archer D."/>
            <person name="Bencina M."/>
            <person name="Braus G."/>
            <person name="Coutinho P."/>
            <person name="von Dohren H."/>
            <person name="Doonan J."/>
            <person name="Driessen A.J."/>
            <person name="Durek P."/>
            <person name="Espeso E."/>
            <person name="Fekete E."/>
            <person name="Flipphi M."/>
            <person name="Estrada C.G."/>
            <person name="Geysens S."/>
            <person name="Goldman G."/>
            <person name="de Groot P.W."/>
            <person name="Hansen K."/>
            <person name="Harris S.D."/>
            <person name="Heinekamp T."/>
            <person name="Helmstaedt K."/>
            <person name="Henrissat B."/>
            <person name="Hofmann G."/>
            <person name="Homan T."/>
            <person name="Horio T."/>
            <person name="Horiuchi H."/>
            <person name="James S."/>
            <person name="Jones M."/>
            <person name="Karaffa L."/>
            <person name="Karanyi Z."/>
            <person name="Kato M."/>
            <person name="Keller N."/>
            <person name="Kelly D.E."/>
            <person name="Kiel J.A."/>
            <person name="Kim J.M."/>
            <person name="van der Klei I.J."/>
            <person name="Klis F.M."/>
            <person name="Kovalchuk A."/>
            <person name="Krasevec N."/>
            <person name="Kubicek C.P."/>
            <person name="Liu B."/>
            <person name="Maccabe A."/>
            <person name="Meyer V."/>
            <person name="Mirabito P."/>
            <person name="Miskei M."/>
            <person name="Mos M."/>
            <person name="Mullins J."/>
            <person name="Nelson D.R."/>
            <person name="Nielsen J."/>
            <person name="Oakley B.R."/>
            <person name="Osmani S.A."/>
            <person name="Pakula T."/>
            <person name="Paszewski A."/>
            <person name="Paulsen I."/>
            <person name="Pilsyk S."/>
            <person name="Pocsi I."/>
            <person name="Punt P.J."/>
            <person name="Ram A.F."/>
            <person name="Ren Q."/>
            <person name="Robellet X."/>
            <person name="Robson G."/>
            <person name="Seiboth B."/>
            <person name="van Solingen P."/>
            <person name="Specht T."/>
            <person name="Sun J."/>
            <person name="Taheri-Talesh N."/>
            <person name="Takeshita N."/>
            <person name="Ussery D."/>
            <person name="vanKuyk P.A."/>
            <person name="Visser H."/>
            <person name="van de Vondervoort P.J."/>
            <person name="de Vries R.P."/>
            <person name="Walton J."/>
            <person name="Xiang X."/>
            <person name="Xiong Y."/>
            <person name="Zeng A.P."/>
            <person name="Brandt B.W."/>
            <person name="Cornell M.J."/>
            <person name="van den Hondel C.A."/>
            <person name="Visser J."/>
            <person name="Oliver S.G."/>
            <person name="Turner G."/>
        </authorList>
    </citation>
    <scope>GENOME REANNOTATION</scope>
    <source>
        <strain>FGSC A4 / ATCC 38163 / CBS 112.46 / NRRL 194 / M139</strain>
    </source>
</reference>
<reference key="3">
    <citation type="journal article" date="2013" name="Proc. Natl. Acad. Sci. U.S.A.">
        <title>Accurate prediction of secondary metabolite gene clusters in filamentous fungi.</title>
        <authorList>
            <person name="Andersen M.R."/>
            <person name="Nielsen J.B."/>
            <person name="Klitgaard A."/>
            <person name="Petersen L.M."/>
            <person name="Zachariasen M."/>
            <person name="Hansen T.J."/>
            <person name="Blicher L.H."/>
            <person name="Gotfredsen C.H."/>
            <person name="Larsen T.O."/>
            <person name="Nielsen K.F."/>
            <person name="Mortensen U.H."/>
        </authorList>
    </citation>
    <scope>IDENTIFICATION OF THE CLUSTER</scope>
</reference>
<reference key="4">
    <citation type="journal article" date="2016" name="ACS Chem. Biol.">
        <title>New aspercryptins, lipopeptide natural products, revealed by HDAC inhibition in Aspergillus nidulans.</title>
        <authorList>
            <person name="Henke M.T."/>
            <person name="Soukup A.A."/>
            <person name="Goering A.W."/>
            <person name="McClure R.A."/>
            <person name="Thomson R.J."/>
            <person name="Keller N.P."/>
            <person name="Kelleher N.L."/>
        </authorList>
    </citation>
    <scope>FUNCTION</scope>
</reference>
<reference key="5">
    <citation type="journal article" date="2016" name="Angew. Chem. Int. Ed.">
        <title>Development of genetic dereplication strains in Aspergillus nidulans results in the discovery of aspercryptin.</title>
        <authorList>
            <person name="Chiang Y.M."/>
            <person name="Ahuja M."/>
            <person name="Oakley C.E."/>
            <person name="Entwistle R."/>
            <person name="Asokan A."/>
            <person name="Zutz C."/>
            <person name="Wang C.C."/>
            <person name="Oakley B.R."/>
        </authorList>
    </citation>
    <scope>FUNCTION</scope>
</reference>
<sequence length="610" mass="68177">MAPKDSQVSASNEMTGNPPSSVQGRSRNGCITCRIRRVKCDEERPHCRRCQSTGRKCDGYTPLTGQQPKQQPPQQAAKAGSSELRIIQHTPQVTQPTQLCMFPGVDTLLTEDEYRALEFFNVQTVSCFGPRAGGWLLNAACQDSAIRRAAMALGTMHRVVLYHSRTPPHDRRRGMQLALQQYNSAIRQGLKLFAGSNDSSADGILSMCVLFFCLDSLQGHFRSALRHVGSGLRILAQRQLRGQRAENTLLPPDVIQSLFAALEAQMLEIDGQSPLLDENGLPVRGAGRPAPLWTLEEAQDTFRSIYNDFLRLLSFSARLEEPVDELEMVQIVEQVMARKQQVQTDLDAWSLEFDHFLAHIFHWGNQASQQSVRMLQLWRTMLTMVLHMGWPPQDTAWGSHLSELNIILDLAEQIIVMSPPLELESSAGSTFSLQGHSRAGSPSGSRSRSMSTSSSASRDDSPTTTTTTTTTPTPRLKKETDPQSTYTPILPRPFHSSPSRFTLALGILPALWTIATQCRDSSVRYRAIDLIGRSKRREGVWDSDLHFRLALQLARHEEQAAGLDAGAEYTHARIPPEARVTLNGRFDEGRKAKISYIRENVRVGEEIFHW</sequence>
<proteinExistence type="inferred from homology"/>
<protein>
    <recommendedName>
        <fullName evidence="5">Aspercryptin biosynthesis cluster-specific transcription regulator atnN</fullName>
    </recommendedName>
    <alternativeName>
        <fullName evidence="4">Aspercryptin biosynthesis cluster protein N</fullName>
    </alternativeName>
</protein>
<name>ATNN_EMENI</name>